<name>NDPA_SALAR</name>
<protein>
    <recommendedName>
        <fullName evidence="1">Nucleoid-associated protein YejK</fullName>
    </recommendedName>
</protein>
<gene>
    <name evidence="1" type="primary">yejK</name>
    <name type="ordered locus">SARI_00661</name>
</gene>
<evidence type="ECO:0000255" key="1">
    <source>
        <dbReference type="HAMAP-Rule" id="MF_00730"/>
    </source>
</evidence>
<proteinExistence type="inferred from homology"/>
<comment type="subcellular location">
    <subcellularLocation>
        <location evidence="1">Cytoplasm</location>
        <location evidence="1">Nucleoid</location>
    </subcellularLocation>
</comment>
<comment type="similarity">
    <text evidence="1">Belongs to the YejK family.</text>
</comment>
<keyword id="KW-0963">Cytoplasm</keyword>
<keyword id="KW-1185">Reference proteome</keyword>
<accession>A9MK26</accession>
<dbReference type="EMBL" id="CP000880">
    <property type="protein sequence ID" value="ABX20584.1"/>
    <property type="molecule type" value="Genomic_DNA"/>
</dbReference>
<dbReference type="SMR" id="A9MK26"/>
<dbReference type="STRING" id="41514.SARI_00661"/>
<dbReference type="KEGG" id="ses:SARI_00661"/>
<dbReference type="HOGENOM" id="CLU_063050_0_1_6"/>
<dbReference type="Proteomes" id="UP000002084">
    <property type="component" value="Chromosome"/>
</dbReference>
<dbReference type="GO" id="GO:0043590">
    <property type="term" value="C:bacterial nucleoid"/>
    <property type="evidence" value="ECO:0007669"/>
    <property type="project" value="TreeGrafter"/>
</dbReference>
<dbReference type="GO" id="GO:0005737">
    <property type="term" value="C:cytoplasm"/>
    <property type="evidence" value="ECO:0007669"/>
    <property type="project" value="UniProtKB-UniRule"/>
</dbReference>
<dbReference type="GO" id="GO:0003690">
    <property type="term" value="F:double-stranded DNA binding"/>
    <property type="evidence" value="ECO:0007669"/>
    <property type="project" value="TreeGrafter"/>
</dbReference>
<dbReference type="GO" id="GO:0003727">
    <property type="term" value="F:single-stranded RNA binding"/>
    <property type="evidence" value="ECO:0007669"/>
    <property type="project" value="TreeGrafter"/>
</dbReference>
<dbReference type="HAMAP" id="MF_00730">
    <property type="entry name" value="NdpA"/>
    <property type="match status" value="1"/>
</dbReference>
<dbReference type="InterPro" id="IPR007358">
    <property type="entry name" value="Nucleoid_associated_NdpA"/>
</dbReference>
<dbReference type="NCBIfam" id="NF001557">
    <property type="entry name" value="PRK00378.1"/>
    <property type="match status" value="1"/>
</dbReference>
<dbReference type="PANTHER" id="PTHR38772">
    <property type="match status" value="1"/>
</dbReference>
<dbReference type="PANTHER" id="PTHR38772:SF1">
    <property type="entry name" value="NUCLEOID-ASSOCIATED PROTEIN YEJK"/>
    <property type="match status" value="1"/>
</dbReference>
<dbReference type="Pfam" id="PF04245">
    <property type="entry name" value="NA37"/>
    <property type="match status" value="1"/>
</dbReference>
<reference key="1">
    <citation type="submission" date="2007-11" db="EMBL/GenBank/DDBJ databases">
        <authorList>
            <consortium name="The Salmonella enterica serovar Arizonae Genome Sequencing Project"/>
            <person name="McClelland M."/>
            <person name="Sanderson E.K."/>
            <person name="Porwollik S."/>
            <person name="Spieth J."/>
            <person name="Clifton W.S."/>
            <person name="Fulton R."/>
            <person name="Chunyan W."/>
            <person name="Wollam A."/>
            <person name="Shah N."/>
            <person name="Pepin K."/>
            <person name="Bhonagiri V."/>
            <person name="Nash W."/>
            <person name="Johnson M."/>
            <person name="Thiruvilangam P."/>
            <person name="Wilson R."/>
        </authorList>
    </citation>
    <scope>NUCLEOTIDE SEQUENCE [LARGE SCALE GENOMIC DNA]</scope>
    <source>
        <strain>ATCC BAA-731 / CDC346-86 / RSK2980</strain>
    </source>
</reference>
<feature type="chain" id="PRO_1000083330" description="Nucleoid-associated protein YejK">
    <location>
        <begin position="1"/>
        <end position="335"/>
    </location>
</feature>
<organism>
    <name type="scientific">Salmonella arizonae (strain ATCC BAA-731 / CDC346-86 / RSK2980)</name>
    <dbReference type="NCBI Taxonomy" id="41514"/>
    <lineage>
        <taxon>Bacteria</taxon>
        <taxon>Pseudomonadati</taxon>
        <taxon>Pseudomonadota</taxon>
        <taxon>Gammaproteobacteria</taxon>
        <taxon>Enterobacterales</taxon>
        <taxon>Enterobacteriaceae</taxon>
        <taxon>Salmonella</taxon>
    </lineage>
</organism>
<sequence length="335" mass="37950">MSLDINQIALHQLIKRDEQNLELVLRDSLLEPTATVVEMVAELHRVYSAKNKAYGLFNEESELAQALRLQRQGEEDFLAFSRAATGRLRDELTKYPFADGGIVLFCHYRYLAVEYLLVAVLNNLSSMRVNENLDINPTHYLDINHADIVARIDLTEWETNPESTRYLTFLKGRVGRKVADFFMDFLGASEGLNAKAQNRGLLQAVDDFTAEAQLDKAERQNVRRQVYSYCNERLQAGEEIELESLSKELSCVSEVSFSEFTAEKGYELEESFPADRSTLRQLTKYAGSGGGLTINFDAMLLGERIFWDPATDTLTIKGTPPNLRDQLQRRTSGGK</sequence>